<sequence>MGDGLTPEGKAQLITRNLQEVLGEDKMKEILKERPLRIYWGTATTGKPHVAYFVPMSKIADFLKAGCEVTILFADLHAYLDNMKAPWDLLELRTRYYEQVIQAMLQSIGVPLERLRFIRGTEFQLSKEYTLDVYRLSSVVTQHDAKKAGAEVVKQVEHPLLSGLLYPGLQALDEEYLKVDAQFGGVDQRKIFTFAEKYLPALGYAKRIHLMNPMVPGLTGAKMSSSEEESKIDLLDSPADVKKKLKKAFCEPGNIENNGVLSFVRHVLFPLKSEFVVLRDEKFGGNKTYTDFETLEKDFTEQLVHPGDLKASVEKALNKLLDPIREKFNSPEMKKLSNDAYPGASKQKTVPKGSTKNSGPEEIDPSLLDLRVGKILSVRQHPDADSLYVESVDVGEENPRCVVSGLVQYVPSDQLLGRSVVLLCNLKPQKMRGIESQGMLLCASTEGEQKQVEPLDPPTGSAPGERIYIEGYENGEPEGELKPKKKVFEKLQVDFRISDDLCAQWKGKNFLTKLGSVTCKTLRGGSIS</sequence>
<keyword id="KW-0030">Aminoacyl-tRNA synthetase</keyword>
<keyword id="KW-0067">ATP-binding</keyword>
<keyword id="KW-0963">Cytoplasm</keyword>
<keyword id="KW-0436">Ligase</keyword>
<keyword id="KW-0547">Nucleotide-binding</keyword>
<keyword id="KW-0539">Nucleus</keyword>
<keyword id="KW-0648">Protein biosynthesis</keyword>
<keyword id="KW-1185">Reference proteome</keyword>
<keyword id="KW-0694">RNA-binding</keyword>
<keyword id="KW-0820">tRNA-binding</keyword>
<organism>
    <name type="scientific">Xenopus tropicalis</name>
    <name type="common">Western clawed frog</name>
    <name type="synonym">Silurana tropicalis</name>
    <dbReference type="NCBI Taxonomy" id="8364"/>
    <lineage>
        <taxon>Eukaryota</taxon>
        <taxon>Metazoa</taxon>
        <taxon>Chordata</taxon>
        <taxon>Craniata</taxon>
        <taxon>Vertebrata</taxon>
        <taxon>Euteleostomi</taxon>
        <taxon>Amphibia</taxon>
        <taxon>Batrachia</taxon>
        <taxon>Anura</taxon>
        <taxon>Pipoidea</taxon>
        <taxon>Pipidae</taxon>
        <taxon>Xenopodinae</taxon>
        <taxon>Xenopus</taxon>
        <taxon>Silurana</taxon>
    </lineage>
</organism>
<feature type="chain" id="PRO_0000239695" description="Tyrosine--tRNA ligase, cytoplasmic">
    <location>
        <begin position="1"/>
        <end position="528"/>
    </location>
</feature>
<feature type="domain" description="tRNA-binding" evidence="2">
    <location>
        <begin position="364"/>
        <end position="468"/>
    </location>
</feature>
<feature type="region of interest" description="Disordered" evidence="3">
    <location>
        <begin position="335"/>
        <end position="364"/>
    </location>
</feature>
<feature type="short sequence motif" description="'HIGH' region" evidence="1">
    <location>
        <begin position="44"/>
        <end position="52"/>
    </location>
</feature>
<feature type="short sequence motif" description="'KMSKS' region" evidence="1">
    <location>
        <begin position="222"/>
        <end position="226"/>
    </location>
</feature>
<feature type="short sequence motif" description="Nuclear localization signal" evidence="1">
    <location>
        <begin position="242"/>
        <end position="247"/>
    </location>
</feature>
<feature type="compositionally biased region" description="Polar residues" evidence="3">
    <location>
        <begin position="346"/>
        <end position="358"/>
    </location>
</feature>
<feature type="binding site" evidence="1">
    <location>
        <position position="39"/>
    </location>
    <ligand>
        <name>L-tyrosine</name>
        <dbReference type="ChEBI" id="CHEBI:58315"/>
    </ligand>
</feature>
<feature type="binding site" evidence="1">
    <location>
        <position position="166"/>
    </location>
    <ligand>
        <name>L-tyrosine</name>
        <dbReference type="ChEBI" id="CHEBI:58315"/>
    </ligand>
</feature>
<feature type="binding site" evidence="1">
    <location>
        <position position="170"/>
    </location>
    <ligand>
        <name>L-tyrosine</name>
        <dbReference type="ChEBI" id="CHEBI:58315"/>
    </ligand>
</feature>
<feature type="binding site" evidence="1">
    <location>
        <position position="173"/>
    </location>
    <ligand>
        <name>L-tyrosine</name>
        <dbReference type="ChEBI" id="CHEBI:58315"/>
    </ligand>
</feature>
<feature type="binding site" evidence="1">
    <location>
        <position position="188"/>
    </location>
    <ligand>
        <name>L-tyrosine</name>
        <dbReference type="ChEBI" id="CHEBI:58315"/>
    </ligand>
</feature>
<comment type="function">
    <text evidence="1">Catalyzes the attachment of tyrosine to tRNA(Tyr) in a two-step reaction: tyrosine is first activated by ATP to form Tyr-AMP and then transferred to the acceptor end of tRNA(Tyr).</text>
</comment>
<comment type="catalytic activity">
    <reaction evidence="1">
        <text>tRNA(Tyr) + L-tyrosine + ATP = L-tyrosyl-tRNA(Tyr) + AMP + diphosphate + H(+)</text>
        <dbReference type="Rhea" id="RHEA:10220"/>
        <dbReference type="Rhea" id="RHEA-COMP:9706"/>
        <dbReference type="Rhea" id="RHEA-COMP:9707"/>
        <dbReference type="ChEBI" id="CHEBI:15378"/>
        <dbReference type="ChEBI" id="CHEBI:30616"/>
        <dbReference type="ChEBI" id="CHEBI:33019"/>
        <dbReference type="ChEBI" id="CHEBI:58315"/>
        <dbReference type="ChEBI" id="CHEBI:78442"/>
        <dbReference type="ChEBI" id="CHEBI:78536"/>
        <dbReference type="ChEBI" id="CHEBI:456215"/>
        <dbReference type="EC" id="6.1.1.1"/>
    </reaction>
    <physiologicalReaction direction="left-to-right" evidence="1">
        <dbReference type="Rhea" id="RHEA:10221"/>
    </physiologicalReaction>
</comment>
<comment type="subunit">
    <text evidence="1">Homodimer.</text>
</comment>
<comment type="subcellular location">
    <subcellularLocation>
        <location evidence="1">Cytoplasm</location>
    </subcellularLocation>
    <subcellularLocation>
        <location evidence="1">Nucleus</location>
    </subcellularLocation>
</comment>
<comment type="domain">
    <text evidence="1">The nuclear localization signal, which mediates localization to the nucleus, is also important for interacting with tRNA(Tyr), suggesting that it is sterically blocked when tRNA(Tyr) is bound.</text>
</comment>
<comment type="similarity">
    <text evidence="4">Belongs to the class-I aminoacyl-tRNA synthetase family.</text>
</comment>
<protein>
    <recommendedName>
        <fullName>Tyrosine--tRNA ligase, cytoplasmic</fullName>
        <ecNumber evidence="1">6.1.1.1</ecNumber>
    </recommendedName>
    <alternativeName>
        <fullName>Tyrosyl-tRNA synthetase</fullName>
        <shortName>TyrRS</shortName>
    </alternativeName>
</protein>
<accession>Q6DIJ1</accession>
<gene>
    <name type="primary">yars1</name>
    <name type="synonym">yars</name>
</gene>
<evidence type="ECO:0000250" key="1">
    <source>
        <dbReference type="UniProtKB" id="P54577"/>
    </source>
</evidence>
<evidence type="ECO:0000255" key="2">
    <source>
        <dbReference type="PROSITE-ProRule" id="PRU00209"/>
    </source>
</evidence>
<evidence type="ECO:0000256" key="3">
    <source>
        <dbReference type="SAM" id="MobiDB-lite"/>
    </source>
</evidence>
<evidence type="ECO:0000305" key="4"/>
<dbReference type="EC" id="6.1.1.1" evidence="1"/>
<dbReference type="EMBL" id="BC075547">
    <property type="protein sequence ID" value="AAH75547.1"/>
    <property type="molecule type" value="mRNA"/>
</dbReference>
<dbReference type="RefSeq" id="NP_001004987.1">
    <property type="nucleotide sequence ID" value="NM_001004987.1"/>
</dbReference>
<dbReference type="SMR" id="Q6DIJ1"/>
<dbReference type="FunCoup" id="Q6DIJ1">
    <property type="interactions" value="2264"/>
</dbReference>
<dbReference type="STRING" id="8364.ENSXETP00000027453"/>
<dbReference type="PaxDb" id="8364-ENSXETP00000057912"/>
<dbReference type="DNASU" id="448444"/>
<dbReference type="GeneID" id="448444"/>
<dbReference type="KEGG" id="xtr:448444"/>
<dbReference type="AGR" id="Xenbase:XB-GENE-491608"/>
<dbReference type="CTD" id="8565"/>
<dbReference type="Xenbase" id="XB-GENE-491608">
    <property type="gene designation" value="yars1"/>
</dbReference>
<dbReference type="eggNOG" id="KOG2144">
    <property type="taxonomic scope" value="Eukaryota"/>
</dbReference>
<dbReference type="eggNOG" id="KOG2241">
    <property type="taxonomic scope" value="Eukaryota"/>
</dbReference>
<dbReference type="InParanoid" id="Q6DIJ1"/>
<dbReference type="OMA" id="RKIHMLA"/>
<dbReference type="OrthoDB" id="197206at2759"/>
<dbReference type="Proteomes" id="UP000008143">
    <property type="component" value="Chromosome 2"/>
</dbReference>
<dbReference type="GO" id="GO:0005737">
    <property type="term" value="C:cytoplasm"/>
    <property type="evidence" value="ECO:0007669"/>
    <property type="project" value="UniProtKB-SubCell"/>
</dbReference>
<dbReference type="GO" id="GO:0005634">
    <property type="term" value="C:nucleus"/>
    <property type="evidence" value="ECO:0007669"/>
    <property type="project" value="UniProtKB-SubCell"/>
</dbReference>
<dbReference type="GO" id="GO:0005524">
    <property type="term" value="F:ATP binding"/>
    <property type="evidence" value="ECO:0007669"/>
    <property type="project" value="UniProtKB-KW"/>
</dbReference>
<dbReference type="GO" id="GO:0000049">
    <property type="term" value="F:tRNA binding"/>
    <property type="evidence" value="ECO:0007669"/>
    <property type="project" value="UniProtKB-KW"/>
</dbReference>
<dbReference type="GO" id="GO:0004831">
    <property type="term" value="F:tyrosine-tRNA ligase activity"/>
    <property type="evidence" value="ECO:0007669"/>
    <property type="project" value="UniProtKB-EC"/>
</dbReference>
<dbReference type="GO" id="GO:0006437">
    <property type="term" value="P:tyrosyl-tRNA aminoacylation"/>
    <property type="evidence" value="ECO:0007669"/>
    <property type="project" value="InterPro"/>
</dbReference>
<dbReference type="CDD" id="cd02799">
    <property type="entry name" value="tRNA_bind_EMAP-II_like"/>
    <property type="match status" value="1"/>
</dbReference>
<dbReference type="CDD" id="cd00805">
    <property type="entry name" value="TyrRS_core"/>
    <property type="match status" value="1"/>
</dbReference>
<dbReference type="FunFam" id="1.10.240.10:FF:000004">
    <property type="entry name" value="Tyrosine--tRNA ligase"/>
    <property type="match status" value="1"/>
</dbReference>
<dbReference type="FunFam" id="3.40.50.620:FF:000040">
    <property type="entry name" value="Tyrosine--tRNA ligase"/>
    <property type="match status" value="1"/>
</dbReference>
<dbReference type="FunFam" id="2.40.50.140:FF:000047">
    <property type="entry name" value="tyrosine--tRNA ligase, cytoplasmic isoform X2"/>
    <property type="match status" value="1"/>
</dbReference>
<dbReference type="Gene3D" id="3.40.50.620">
    <property type="entry name" value="HUPs"/>
    <property type="match status" value="1"/>
</dbReference>
<dbReference type="Gene3D" id="2.40.50.140">
    <property type="entry name" value="Nucleic acid-binding proteins"/>
    <property type="match status" value="1"/>
</dbReference>
<dbReference type="Gene3D" id="1.10.240.10">
    <property type="entry name" value="Tyrosyl-Transfer RNA Synthetase"/>
    <property type="match status" value="1"/>
</dbReference>
<dbReference type="InterPro" id="IPR002305">
    <property type="entry name" value="aa-tRNA-synth_Ic"/>
</dbReference>
<dbReference type="InterPro" id="IPR012340">
    <property type="entry name" value="NA-bd_OB-fold"/>
</dbReference>
<dbReference type="InterPro" id="IPR014729">
    <property type="entry name" value="Rossmann-like_a/b/a_fold"/>
</dbReference>
<dbReference type="InterPro" id="IPR002547">
    <property type="entry name" value="tRNA-bd_dom"/>
</dbReference>
<dbReference type="InterPro" id="IPR002307">
    <property type="entry name" value="Tyr-tRNA-ligase"/>
</dbReference>
<dbReference type="InterPro" id="IPR051270">
    <property type="entry name" value="Tyrosine-tRNA_ligase_regulator"/>
</dbReference>
<dbReference type="NCBIfam" id="NF006330">
    <property type="entry name" value="PRK08560.1"/>
    <property type="match status" value="1"/>
</dbReference>
<dbReference type="NCBIfam" id="TIGR00234">
    <property type="entry name" value="tyrS"/>
    <property type="match status" value="1"/>
</dbReference>
<dbReference type="PANTHER" id="PTHR11586">
    <property type="entry name" value="TRNA-AMINOACYLATION COFACTOR ARC1 FAMILY MEMBER"/>
    <property type="match status" value="1"/>
</dbReference>
<dbReference type="PANTHER" id="PTHR11586:SF43">
    <property type="entry name" value="TYROSINE--TRNA LIGASE, CYTOPLASMIC"/>
    <property type="match status" value="1"/>
</dbReference>
<dbReference type="Pfam" id="PF00579">
    <property type="entry name" value="tRNA-synt_1b"/>
    <property type="match status" value="1"/>
</dbReference>
<dbReference type="Pfam" id="PF01588">
    <property type="entry name" value="tRNA_bind"/>
    <property type="match status" value="1"/>
</dbReference>
<dbReference type="PRINTS" id="PR01040">
    <property type="entry name" value="TRNASYNTHTYR"/>
</dbReference>
<dbReference type="SUPFAM" id="SSF50249">
    <property type="entry name" value="Nucleic acid-binding proteins"/>
    <property type="match status" value="1"/>
</dbReference>
<dbReference type="SUPFAM" id="SSF52374">
    <property type="entry name" value="Nucleotidylyl transferase"/>
    <property type="match status" value="1"/>
</dbReference>
<dbReference type="PROSITE" id="PS50886">
    <property type="entry name" value="TRBD"/>
    <property type="match status" value="1"/>
</dbReference>
<reference key="1">
    <citation type="submission" date="2004-06" db="EMBL/GenBank/DDBJ databases">
        <authorList>
            <consortium name="NIH - Xenopus Gene Collection (XGC) project"/>
        </authorList>
    </citation>
    <scope>NUCLEOTIDE SEQUENCE [LARGE SCALE MRNA]</scope>
    <source>
        <tissue>Embryo</tissue>
    </source>
</reference>
<name>SYYC_XENTR</name>
<proteinExistence type="evidence at transcript level"/>